<feature type="chain" id="PRO_0000176113" description="Uracil-DNA glycosylase 1">
    <location>
        <begin position="1"/>
        <end position="221"/>
    </location>
</feature>
<feature type="active site" description="Proton acceptor" evidence="1">
    <location>
        <position position="61"/>
    </location>
</feature>
<evidence type="ECO:0000255" key="1">
    <source>
        <dbReference type="HAMAP-Rule" id="MF_00148"/>
    </source>
</evidence>
<name>UNG1_LISMO</name>
<comment type="function">
    <text evidence="1">Excises uracil residues from the DNA which can arise as a result of misincorporation of dUMP residues by DNA polymerase or due to deamination of cytosine.</text>
</comment>
<comment type="catalytic activity">
    <reaction evidence="1">
        <text>Hydrolyzes single-stranded DNA or mismatched double-stranded DNA and polynucleotides, releasing free uracil.</text>
        <dbReference type="EC" id="3.2.2.27"/>
    </reaction>
</comment>
<comment type="subcellular location">
    <subcellularLocation>
        <location evidence="1">Cytoplasm</location>
    </subcellularLocation>
</comment>
<comment type="similarity">
    <text evidence="1">Belongs to the uracil-DNA glycosylase (UDG) superfamily. UNG family.</text>
</comment>
<organism>
    <name type="scientific">Listeria monocytogenes serovar 1/2a (strain ATCC BAA-679 / EGD-e)</name>
    <dbReference type="NCBI Taxonomy" id="169963"/>
    <lineage>
        <taxon>Bacteria</taxon>
        <taxon>Bacillati</taxon>
        <taxon>Bacillota</taxon>
        <taxon>Bacilli</taxon>
        <taxon>Bacillales</taxon>
        <taxon>Listeriaceae</taxon>
        <taxon>Listeria</taxon>
    </lineage>
</organism>
<sequence>MVKTWEEFLKQEAKQPYFIELMEAVKDARAKGNVYPSEEDMFSCFRLCPYNQVKVVILGQDPYHGPGQAHGLSFSVQKDVRIPPSLRNIYKELKTDLDIEPADHGYLAKWAEQGVLLMNTSWSVEEGKAGSHKKLGWATFTDHVLEELNNYDKPLVFILWGNHAIKAASGITNPQHLIIKGVHPSPLAASRGFFGSKPFSKTNAFLEEHERKPIDWDLNEQ</sequence>
<dbReference type="EC" id="3.2.2.27" evidence="1"/>
<dbReference type="EMBL" id="AL591975">
    <property type="protein sequence ID" value="CAC98469.1"/>
    <property type="molecule type" value="Genomic_DNA"/>
</dbReference>
<dbReference type="PIR" id="AG1123">
    <property type="entry name" value="AG1123"/>
</dbReference>
<dbReference type="RefSeq" id="NP_463920.1">
    <property type="nucleotide sequence ID" value="NC_003210.1"/>
</dbReference>
<dbReference type="RefSeq" id="WP_003723102.1">
    <property type="nucleotide sequence ID" value="NZ_CP149495.1"/>
</dbReference>
<dbReference type="SMR" id="Q8Y9X7"/>
<dbReference type="STRING" id="169963.gene:17593041"/>
<dbReference type="PaxDb" id="169963-lmo0390"/>
<dbReference type="EnsemblBacteria" id="CAC98469">
    <property type="protein sequence ID" value="CAC98469"/>
    <property type="gene ID" value="CAC98469"/>
</dbReference>
<dbReference type="GeneID" id="987648"/>
<dbReference type="KEGG" id="lmo:lmo0390"/>
<dbReference type="PATRIC" id="fig|169963.11.peg.403"/>
<dbReference type="eggNOG" id="COG0692">
    <property type="taxonomic scope" value="Bacteria"/>
</dbReference>
<dbReference type="HOGENOM" id="CLU_032162_3_1_9"/>
<dbReference type="OrthoDB" id="9804372at2"/>
<dbReference type="PhylomeDB" id="Q8Y9X7"/>
<dbReference type="BioCyc" id="LMON169963:LMO0390-MONOMER"/>
<dbReference type="Proteomes" id="UP000000817">
    <property type="component" value="Chromosome"/>
</dbReference>
<dbReference type="GO" id="GO:0005737">
    <property type="term" value="C:cytoplasm"/>
    <property type="evidence" value="ECO:0007669"/>
    <property type="project" value="UniProtKB-SubCell"/>
</dbReference>
<dbReference type="GO" id="GO:0004844">
    <property type="term" value="F:uracil DNA N-glycosylase activity"/>
    <property type="evidence" value="ECO:0007669"/>
    <property type="project" value="UniProtKB-UniRule"/>
</dbReference>
<dbReference type="GO" id="GO:0097510">
    <property type="term" value="P:base-excision repair, AP site formation via deaminated base removal"/>
    <property type="evidence" value="ECO:0000318"/>
    <property type="project" value="GO_Central"/>
</dbReference>
<dbReference type="CDD" id="cd10027">
    <property type="entry name" value="UDG-F1-like"/>
    <property type="match status" value="1"/>
</dbReference>
<dbReference type="FunFam" id="3.40.470.10:FF:000001">
    <property type="entry name" value="Uracil-DNA glycosylase"/>
    <property type="match status" value="1"/>
</dbReference>
<dbReference type="Gene3D" id="3.40.470.10">
    <property type="entry name" value="Uracil-DNA glycosylase-like domain"/>
    <property type="match status" value="1"/>
</dbReference>
<dbReference type="HAMAP" id="MF_00148">
    <property type="entry name" value="UDG"/>
    <property type="match status" value="1"/>
</dbReference>
<dbReference type="InterPro" id="IPR002043">
    <property type="entry name" value="UDG_fam1"/>
</dbReference>
<dbReference type="InterPro" id="IPR018085">
    <property type="entry name" value="Ura-DNA_Glyclase_AS"/>
</dbReference>
<dbReference type="InterPro" id="IPR005122">
    <property type="entry name" value="Uracil-DNA_glycosylase-like"/>
</dbReference>
<dbReference type="InterPro" id="IPR036895">
    <property type="entry name" value="Uracil-DNA_glycosylase-like_sf"/>
</dbReference>
<dbReference type="NCBIfam" id="NF003588">
    <property type="entry name" value="PRK05254.1-1"/>
    <property type="match status" value="1"/>
</dbReference>
<dbReference type="NCBIfam" id="NF003589">
    <property type="entry name" value="PRK05254.1-2"/>
    <property type="match status" value="1"/>
</dbReference>
<dbReference type="NCBIfam" id="NF003591">
    <property type="entry name" value="PRK05254.1-4"/>
    <property type="match status" value="1"/>
</dbReference>
<dbReference type="NCBIfam" id="NF003592">
    <property type="entry name" value="PRK05254.1-5"/>
    <property type="match status" value="1"/>
</dbReference>
<dbReference type="NCBIfam" id="TIGR00628">
    <property type="entry name" value="ung"/>
    <property type="match status" value="1"/>
</dbReference>
<dbReference type="PANTHER" id="PTHR11264">
    <property type="entry name" value="URACIL-DNA GLYCOSYLASE"/>
    <property type="match status" value="1"/>
</dbReference>
<dbReference type="PANTHER" id="PTHR11264:SF0">
    <property type="entry name" value="URACIL-DNA GLYCOSYLASE"/>
    <property type="match status" value="1"/>
</dbReference>
<dbReference type="Pfam" id="PF03167">
    <property type="entry name" value="UDG"/>
    <property type="match status" value="1"/>
</dbReference>
<dbReference type="SMART" id="SM00986">
    <property type="entry name" value="UDG"/>
    <property type="match status" value="1"/>
</dbReference>
<dbReference type="SMART" id="SM00987">
    <property type="entry name" value="UreE_C"/>
    <property type="match status" value="1"/>
</dbReference>
<dbReference type="SUPFAM" id="SSF52141">
    <property type="entry name" value="Uracil-DNA glycosylase-like"/>
    <property type="match status" value="1"/>
</dbReference>
<dbReference type="PROSITE" id="PS00130">
    <property type="entry name" value="U_DNA_GLYCOSYLASE"/>
    <property type="match status" value="1"/>
</dbReference>
<accession>Q8Y9X7</accession>
<gene>
    <name evidence="1" type="primary">ung1</name>
    <name type="ordered locus">lmo0390</name>
</gene>
<proteinExistence type="inferred from homology"/>
<keyword id="KW-0963">Cytoplasm</keyword>
<keyword id="KW-0227">DNA damage</keyword>
<keyword id="KW-0234">DNA repair</keyword>
<keyword id="KW-0378">Hydrolase</keyword>
<keyword id="KW-1185">Reference proteome</keyword>
<protein>
    <recommendedName>
        <fullName evidence="1">Uracil-DNA glycosylase 1</fullName>
        <shortName evidence="1">UDG 1</shortName>
        <ecNumber evidence="1">3.2.2.27</ecNumber>
    </recommendedName>
</protein>
<reference key="1">
    <citation type="journal article" date="2001" name="Science">
        <title>Comparative genomics of Listeria species.</title>
        <authorList>
            <person name="Glaser P."/>
            <person name="Frangeul L."/>
            <person name="Buchrieser C."/>
            <person name="Rusniok C."/>
            <person name="Amend A."/>
            <person name="Baquero F."/>
            <person name="Berche P."/>
            <person name="Bloecker H."/>
            <person name="Brandt P."/>
            <person name="Chakraborty T."/>
            <person name="Charbit A."/>
            <person name="Chetouani F."/>
            <person name="Couve E."/>
            <person name="de Daruvar A."/>
            <person name="Dehoux P."/>
            <person name="Domann E."/>
            <person name="Dominguez-Bernal G."/>
            <person name="Duchaud E."/>
            <person name="Durant L."/>
            <person name="Dussurget O."/>
            <person name="Entian K.-D."/>
            <person name="Fsihi H."/>
            <person name="Garcia-del Portillo F."/>
            <person name="Garrido P."/>
            <person name="Gautier L."/>
            <person name="Goebel W."/>
            <person name="Gomez-Lopez N."/>
            <person name="Hain T."/>
            <person name="Hauf J."/>
            <person name="Jackson D."/>
            <person name="Jones L.-M."/>
            <person name="Kaerst U."/>
            <person name="Kreft J."/>
            <person name="Kuhn M."/>
            <person name="Kunst F."/>
            <person name="Kurapkat G."/>
            <person name="Madueno E."/>
            <person name="Maitournam A."/>
            <person name="Mata Vicente J."/>
            <person name="Ng E."/>
            <person name="Nedjari H."/>
            <person name="Nordsiek G."/>
            <person name="Novella S."/>
            <person name="de Pablos B."/>
            <person name="Perez-Diaz J.-C."/>
            <person name="Purcell R."/>
            <person name="Remmel B."/>
            <person name="Rose M."/>
            <person name="Schlueter T."/>
            <person name="Simoes N."/>
            <person name="Tierrez A."/>
            <person name="Vazquez-Boland J.-A."/>
            <person name="Voss H."/>
            <person name="Wehland J."/>
            <person name="Cossart P."/>
        </authorList>
    </citation>
    <scope>NUCLEOTIDE SEQUENCE [LARGE SCALE GENOMIC DNA]</scope>
    <source>
        <strain>ATCC BAA-679 / EGD-e</strain>
    </source>
</reference>